<sequence>MQLNSTEISELIKQRIAQFNVVSEAHNEGTIVSVSDGIIRVHGLADVMQGEMIALPGNRYAIALNLERDSVGAVVMGPYADLAEGMKVKCTGRILEVPVGRGLLGRVVNTLGEPIDGKGSIENDGFSAVEAIAPGVIERQSVDEPVQTGYKSVDAMIPIGRGQRELIIGDRQTGKTALAIDAIINQRDSGIKCVYVAIGQKASTVANVVRKLEEHDALANTIVVVATASESAALQYLAPYSGCAMGEYFRDRGEDALIIYDDLSKQAVAYRQISLLLRRPPGREAYPGDVFYLHSRLLERAARVNAEYVEAFTKGEVKGKTGSLTALPIIETQAGDVSAFVPTNVISITDGQIFLESSLFNAGIRPAVNPGISVSRVGGAAQTKIMKKLSGGIRTALAQYRELAAFSQFASDLDDATRKQLSHGQKVTELLKQKQYAPMSVAQQSLVLFAAERGYLGDVELAKVGSFEAALLAFADREHAELLQQINQTGAYNDEIEAKLKGILDTFKATQSW</sequence>
<name>ATPA_YERPB</name>
<comment type="function">
    <text evidence="1">Produces ATP from ADP in the presence of a proton gradient across the membrane. The alpha chain is a regulatory subunit.</text>
</comment>
<comment type="catalytic activity">
    <reaction evidence="1">
        <text>ATP + H2O + 4 H(+)(in) = ADP + phosphate + 5 H(+)(out)</text>
        <dbReference type="Rhea" id="RHEA:57720"/>
        <dbReference type="ChEBI" id="CHEBI:15377"/>
        <dbReference type="ChEBI" id="CHEBI:15378"/>
        <dbReference type="ChEBI" id="CHEBI:30616"/>
        <dbReference type="ChEBI" id="CHEBI:43474"/>
        <dbReference type="ChEBI" id="CHEBI:456216"/>
        <dbReference type="EC" id="7.1.2.2"/>
    </reaction>
</comment>
<comment type="subunit">
    <text evidence="1">F-type ATPases have 2 components, CF(1) - the catalytic core - and CF(0) - the membrane proton channel. CF(1) has five subunits: alpha(3), beta(3), gamma(1), delta(1), epsilon(1). CF(0) has three main subunits: a(1), b(2) and c(9-12). The alpha and beta chains form an alternating ring which encloses part of the gamma chain. CF(1) is attached to CF(0) by a central stalk formed by the gamma and epsilon chains, while a peripheral stalk is formed by the delta and b chains.</text>
</comment>
<comment type="subcellular location">
    <subcellularLocation>
        <location evidence="1">Cell inner membrane</location>
        <topology evidence="1">Peripheral membrane protein</topology>
    </subcellularLocation>
</comment>
<comment type="similarity">
    <text evidence="1">Belongs to the ATPase alpha/beta chains family.</text>
</comment>
<reference key="1">
    <citation type="submission" date="2008-04" db="EMBL/GenBank/DDBJ databases">
        <title>Complete sequence of Yersinia pseudotuberculosis PB1/+.</title>
        <authorList>
            <person name="Copeland A."/>
            <person name="Lucas S."/>
            <person name="Lapidus A."/>
            <person name="Glavina del Rio T."/>
            <person name="Dalin E."/>
            <person name="Tice H."/>
            <person name="Bruce D."/>
            <person name="Goodwin L."/>
            <person name="Pitluck S."/>
            <person name="Munk A.C."/>
            <person name="Brettin T."/>
            <person name="Detter J.C."/>
            <person name="Han C."/>
            <person name="Tapia R."/>
            <person name="Schmutz J."/>
            <person name="Larimer F."/>
            <person name="Land M."/>
            <person name="Hauser L."/>
            <person name="Challacombe J.F."/>
            <person name="Green L."/>
            <person name="Lindler L.E."/>
            <person name="Nikolich M.P."/>
            <person name="Richardson P."/>
        </authorList>
    </citation>
    <scope>NUCLEOTIDE SEQUENCE [LARGE SCALE GENOMIC DNA]</scope>
    <source>
        <strain>PB1/+</strain>
    </source>
</reference>
<proteinExistence type="inferred from homology"/>
<protein>
    <recommendedName>
        <fullName evidence="1">ATP synthase subunit alpha</fullName>
        <ecNumber evidence="1">7.1.2.2</ecNumber>
    </recommendedName>
    <alternativeName>
        <fullName evidence="1">ATP synthase F1 sector subunit alpha</fullName>
    </alternativeName>
    <alternativeName>
        <fullName evidence="1">F-ATPase subunit alpha</fullName>
    </alternativeName>
</protein>
<feature type="chain" id="PRO_1000143457" description="ATP synthase subunit alpha">
    <location>
        <begin position="1"/>
        <end position="513"/>
    </location>
</feature>
<feature type="binding site" evidence="1">
    <location>
        <begin position="169"/>
        <end position="176"/>
    </location>
    <ligand>
        <name>ATP</name>
        <dbReference type="ChEBI" id="CHEBI:30616"/>
    </ligand>
</feature>
<feature type="site" description="Required for activity" evidence="1">
    <location>
        <position position="373"/>
    </location>
</feature>
<accession>B2K845</accession>
<keyword id="KW-0066">ATP synthesis</keyword>
<keyword id="KW-0067">ATP-binding</keyword>
<keyword id="KW-0997">Cell inner membrane</keyword>
<keyword id="KW-1003">Cell membrane</keyword>
<keyword id="KW-0139">CF(1)</keyword>
<keyword id="KW-0375">Hydrogen ion transport</keyword>
<keyword id="KW-0406">Ion transport</keyword>
<keyword id="KW-0472">Membrane</keyword>
<keyword id="KW-0547">Nucleotide-binding</keyword>
<keyword id="KW-1278">Translocase</keyword>
<keyword id="KW-0813">Transport</keyword>
<evidence type="ECO:0000255" key="1">
    <source>
        <dbReference type="HAMAP-Rule" id="MF_01346"/>
    </source>
</evidence>
<organism>
    <name type="scientific">Yersinia pseudotuberculosis serotype IB (strain PB1/+)</name>
    <dbReference type="NCBI Taxonomy" id="502801"/>
    <lineage>
        <taxon>Bacteria</taxon>
        <taxon>Pseudomonadati</taxon>
        <taxon>Pseudomonadota</taxon>
        <taxon>Gammaproteobacteria</taxon>
        <taxon>Enterobacterales</taxon>
        <taxon>Yersiniaceae</taxon>
        <taxon>Yersinia</taxon>
    </lineage>
</organism>
<gene>
    <name evidence="1" type="primary">atpA</name>
    <name type="ordered locus">YPTS_4178</name>
</gene>
<dbReference type="EC" id="7.1.2.2" evidence="1"/>
<dbReference type="EMBL" id="CP001048">
    <property type="protein sequence ID" value="ACC91121.1"/>
    <property type="molecule type" value="Genomic_DNA"/>
</dbReference>
<dbReference type="RefSeq" id="WP_002220758.1">
    <property type="nucleotide sequence ID" value="NZ_CP009780.1"/>
</dbReference>
<dbReference type="SMR" id="B2K845"/>
<dbReference type="GeneID" id="96663461"/>
<dbReference type="KEGG" id="ypb:YPTS_4178"/>
<dbReference type="PATRIC" id="fig|502801.10.peg.3649"/>
<dbReference type="GO" id="GO:0005886">
    <property type="term" value="C:plasma membrane"/>
    <property type="evidence" value="ECO:0007669"/>
    <property type="project" value="UniProtKB-SubCell"/>
</dbReference>
<dbReference type="GO" id="GO:0045259">
    <property type="term" value="C:proton-transporting ATP synthase complex"/>
    <property type="evidence" value="ECO:0007669"/>
    <property type="project" value="UniProtKB-KW"/>
</dbReference>
<dbReference type="GO" id="GO:0043531">
    <property type="term" value="F:ADP binding"/>
    <property type="evidence" value="ECO:0007669"/>
    <property type="project" value="TreeGrafter"/>
</dbReference>
<dbReference type="GO" id="GO:0005524">
    <property type="term" value="F:ATP binding"/>
    <property type="evidence" value="ECO:0007669"/>
    <property type="project" value="UniProtKB-UniRule"/>
</dbReference>
<dbReference type="GO" id="GO:0046933">
    <property type="term" value="F:proton-transporting ATP synthase activity, rotational mechanism"/>
    <property type="evidence" value="ECO:0007669"/>
    <property type="project" value="UniProtKB-UniRule"/>
</dbReference>
<dbReference type="CDD" id="cd18113">
    <property type="entry name" value="ATP-synt_F1_alpha_C"/>
    <property type="match status" value="1"/>
</dbReference>
<dbReference type="CDD" id="cd18116">
    <property type="entry name" value="ATP-synt_F1_alpha_N"/>
    <property type="match status" value="1"/>
</dbReference>
<dbReference type="CDD" id="cd01132">
    <property type="entry name" value="F1-ATPase_alpha_CD"/>
    <property type="match status" value="1"/>
</dbReference>
<dbReference type="FunFam" id="1.20.150.20:FF:000001">
    <property type="entry name" value="ATP synthase subunit alpha"/>
    <property type="match status" value="1"/>
</dbReference>
<dbReference type="FunFam" id="2.40.30.20:FF:000001">
    <property type="entry name" value="ATP synthase subunit alpha"/>
    <property type="match status" value="1"/>
</dbReference>
<dbReference type="FunFam" id="3.40.50.300:FF:000002">
    <property type="entry name" value="ATP synthase subunit alpha"/>
    <property type="match status" value="1"/>
</dbReference>
<dbReference type="Gene3D" id="2.40.30.20">
    <property type="match status" value="1"/>
</dbReference>
<dbReference type="Gene3D" id="1.20.150.20">
    <property type="entry name" value="ATP synthase alpha/beta chain, C-terminal domain"/>
    <property type="match status" value="1"/>
</dbReference>
<dbReference type="Gene3D" id="3.40.50.300">
    <property type="entry name" value="P-loop containing nucleotide triphosphate hydrolases"/>
    <property type="match status" value="1"/>
</dbReference>
<dbReference type="HAMAP" id="MF_01346">
    <property type="entry name" value="ATP_synth_alpha_bact"/>
    <property type="match status" value="1"/>
</dbReference>
<dbReference type="InterPro" id="IPR023366">
    <property type="entry name" value="ATP_synth_asu-like_sf"/>
</dbReference>
<dbReference type="InterPro" id="IPR000793">
    <property type="entry name" value="ATP_synth_asu_C"/>
</dbReference>
<dbReference type="InterPro" id="IPR038376">
    <property type="entry name" value="ATP_synth_asu_C_sf"/>
</dbReference>
<dbReference type="InterPro" id="IPR033732">
    <property type="entry name" value="ATP_synth_F1_a_nt-bd_dom"/>
</dbReference>
<dbReference type="InterPro" id="IPR005294">
    <property type="entry name" value="ATP_synth_F1_asu"/>
</dbReference>
<dbReference type="InterPro" id="IPR020003">
    <property type="entry name" value="ATPase_a/bsu_AS"/>
</dbReference>
<dbReference type="InterPro" id="IPR004100">
    <property type="entry name" value="ATPase_F1/V1/A1_a/bsu_N"/>
</dbReference>
<dbReference type="InterPro" id="IPR036121">
    <property type="entry name" value="ATPase_F1/V1/A1_a/bsu_N_sf"/>
</dbReference>
<dbReference type="InterPro" id="IPR000194">
    <property type="entry name" value="ATPase_F1/V1/A1_a/bsu_nucl-bd"/>
</dbReference>
<dbReference type="InterPro" id="IPR027417">
    <property type="entry name" value="P-loop_NTPase"/>
</dbReference>
<dbReference type="NCBIfam" id="TIGR00962">
    <property type="entry name" value="atpA"/>
    <property type="match status" value="1"/>
</dbReference>
<dbReference type="NCBIfam" id="NF009884">
    <property type="entry name" value="PRK13343.1"/>
    <property type="match status" value="1"/>
</dbReference>
<dbReference type="PANTHER" id="PTHR48082">
    <property type="entry name" value="ATP SYNTHASE SUBUNIT ALPHA, MITOCHONDRIAL"/>
    <property type="match status" value="1"/>
</dbReference>
<dbReference type="PANTHER" id="PTHR48082:SF2">
    <property type="entry name" value="ATP SYNTHASE SUBUNIT ALPHA, MITOCHONDRIAL"/>
    <property type="match status" value="1"/>
</dbReference>
<dbReference type="Pfam" id="PF00006">
    <property type="entry name" value="ATP-synt_ab"/>
    <property type="match status" value="1"/>
</dbReference>
<dbReference type="Pfam" id="PF00306">
    <property type="entry name" value="ATP-synt_ab_C"/>
    <property type="match status" value="1"/>
</dbReference>
<dbReference type="Pfam" id="PF02874">
    <property type="entry name" value="ATP-synt_ab_N"/>
    <property type="match status" value="1"/>
</dbReference>
<dbReference type="SUPFAM" id="SSF47917">
    <property type="entry name" value="C-terminal domain of alpha and beta subunits of F1 ATP synthase"/>
    <property type="match status" value="1"/>
</dbReference>
<dbReference type="SUPFAM" id="SSF50615">
    <property type="entry name" value="N-terminal domain of alpha and beta subunits of F1 ATP synthase"/>
    <property type="match status" value="1"/>
</dbReference>
<dbReference type="SUPFAM" id="SSF52540">
    <property type="entry name" value="P-loop containing nucleoside triphosphate hydrolases"/>
    <property type="match status" value="1"/>
</dbReference>
<dbReference type="PROSITE" id="PS00152">
    <property type="entry name" value="ATPASE_ALPHA_BETA"/>
    <property type="match status" value="1"/>
</dbReference>